<reference key="1">
    <citation type="submission" date="2002-06" db="EMBL/GenBank/DDBJ databases">
        <title>Nucleotide sequence from the lower pathway of naphthalene degradation in Pseudomonas fluorescens LP6a.</title>
        <authorList>
            <person name="McFarlane D.M."/>
            <person name="Foght J.M."/>
        </authorList>
    </citation>
    <scope>NUCLEOTIDE SEQUENCE [GENOMIC DNA]</scope>
    <source>
        <strain>LP6a</strain>
    </source>
</reference>
<name>4OT_PSEFL</name>
<comment type="function">
    <text>Catalyzes the ketonization of 2-hydroxymuconate stereoselectively to yield 2-oxo-3-hexenedioate.</text>
</comment>
<comment type="catalytic activity">
    <reaction>
        <text>(2Z,4E)-2-hydroxyhexa-2,4-dienedioate = (3E)-2-oxohex-3-enedioate</text>
        <dbReference type="Rhea" id="RHEA:33431"/>
        <dbReference type="ChEBI" id="CHEBI:28080"/>
        <dbReference type="ChEBI" id="CHEBI:64908"/>
        <dbReference type="EC" id="5.3.2.6"/>
    </reaction>
</comment>
<comment type="pathway">
    <text>Aromatic compound metabolism; salicylate degradation.</text>
</comment>
<comment type="subunit">
    <text evidence="1">Homohexamer.</text>
</comment>
<comment type="similarity">
    <text evidence="2">Belongs to the 4-oxalocrotonate tautomerase family.</text>
</comment>
<keyword id="KW-0058">Aromatic hydrocarbons catabolism</keyword>
<keyword id="KW-0413">Isomerase</keyword>
<keyword id="KW-0614">Plasmid</keyword>
<sequence length="63" mass="7107">MPIAQLYILDGRSNEQKETLIREVSEAMSRSLDAPIERVRVIITEMPKNHFGIGGEPASKLNR</sequence>
<dbReference type="EC" id="5.3.2.6"/>
<dbReference type="EMBL" id="AF525494">
    <property type="protein sequence ID" value="AAM88237.1"/>
    <property type="molecule type" value="Genomic_DNA"/>
</dbReference>
<dbReference type="RefSeq" id="WP_011117424.1">
    <property type="nucleotide sequence ID" value="NC_012674.1"/>
</dbReference>
<dbReference type="RefSeq" id="YP_002887446.1">
    <property type="nucleotide sequence ID" value="NC_012674.1"/>
</dbReference>
<dbReference type="SMR" id="Q8KRR5"/>
<dbReference type="UniPathway" id="UPA00824"/>
<dbReference type="GO" id="GO:0016853">
    <property type="term" value="F:isomerase activity"/>
    <property type="evidence" value="ECO:0007669"/>
    <property type="project" value="UniProtKB-KW"/>
</dbReference>
<dbReference type="GO" id="GO:0046244">
    <property type="term" value="P:salicylic acid catabolic process"/>
    <property type="evidence" value="ECO:0007669"/>
    <property type="project" value="UniProtKB-UniPathway"/>
</dbReference>
<dbReference type="CDD" id="cd00491">
    <property type="entry name" value="4Oxalocrotonate_Tautomerase"/>
    <property type="match status" value="1"/>
</dbReference>
<dbReference type="Gene3D" id="3.30.429.10">
    <property type="entry name" value="Macrophage Migration Inhibitory Factor"/>
    <property type="match status" value="1"/>
</dbReference>
<dbReference type="InterPro" id="IPR018191">
    <property type="entry name" value="4-OT"/>
</dbReference>
<dbReference type="InterPro" id="IPR004370">
    <property type="entry name" value="4-OT-like_dom"/>
</dbReference>
<dbReference type="InterPro" id="IPR014347">
    <property type="entry name" value="Tautomerase/MIF_sf"/>
</dbReference>
<dbReference type="NCBIfam" id="NF002571">
    <property type="entry name" value="PRK02220.1"/>
    <property type="match status" value="1"/>
</dbReference>
<dbReference type="NCBIfam" id="TIGR00013">
    <property type="entry name" value="taut"/>
    <property type="match status" value="1"/>
</dbReference>
<dbReference type="PANTHER" id="PTHR35530:SF1">
    <property type="entry name" value="2-HYDROXYMUCONATE TAUTOMERASE"/>
    <property type="match status" value="1"/>
</dbReference>
<dbReference type="PANTHER" id="PTHR35530">
    <property type="entry name" value="TAUTOMERASE-RELATED"/>
    <property type="match status" value="1"/>
</dbReference>
<dbReference type="Pfam" id="PF01361">
    <property type="entry name" value="Tautomerase"/>
    <property type="match status" value="1"/>
</dbReference>
<dbReference type="SUPFAM" id="SSF55331">
    <property type="entry name" value="Tautomerase/MIF"/>
    <property type="match status" value="1"/>
</dbReference>
<proteinExistence type="inferred from homology"/>
<geneLocation type="plasmid">
    <name>pLP6a</name>
</geneLocation>
<feature type="initiator methionine" description="Removed" evidence="1">
    <location>
        <position position="1"/>
    </location>
</feature>
<feature type="chain" id="PRO_0000209512" description="2-hydroxymuconate tautomerase">
    <location>
        <begin position="2"/>
        <end position="63"/>
    </location>
</feature>
<feature type="active site" description="Proton acceptor; via imino nitrogen" evidence="1">
    <location>
        <position position="2"/>
    </location>
</feature>
<evidence type="ECO:0000250" key="1"/>
<evidence type="ECO:0000305" key="2"/>
<accession>Q8KRR5</accession>
<gene>
    <name type="primary">nahJ</name>
</gene>
<organism>
    <name type="scientific">Pseudomonas fluorescens</name>
    <dbReference type="NCBI Taxonomy" id="294"/>
    <lineage>
        <taxon>Bacteria</taxon>
        <taxon>Pseudomonadati</taxon>
        <taxon>Pseudomonadota</taxon>
        <taxon>Gammaproteobacteria</taxon>
        <taxon>Pseudomonadales</taxon>
        <taxon>Pseudomonadaceae</taxon>
        <taxon>Pseudomonas</taxon>
    </lineage>
</organism>
<protein>
    <recommendedName>
        <fullName>2-hydroxymuconate tautomerase</fullName>
        <ecNumber>5.3.2.6</ecNumber>
    </recommendedName>
    <alternativeName>
        <fullName>4-oxalocrotonate tautomerase</fullName>
        <shortName>4-OT</shortName>
    </alternativeName>
</protein>